<name>NIFH_BRADU</name>
<feature type="chain" id="PRO_0000139493" description="Nitrogenase iron protein">
    <location>
        <begin position="1"/>
        <end position="294"/>
    </location>
</feature>
<feature type="binding site" evidence="2">
    <location>
        <begin position="11"/>
        <end position="18"/>
    </location>
    <ligand>
        <name>ATP</name>
        <dbReference type="ChEBI" id="CHEBI:30616"/>
    </ligand>
</feature>
<feature type="binding site" evidence="1">
    <location>
        <position position="99"/>
    </location>
    <ligand>
        <name>[4Fe-4S] cluster</name>
        <dbReference type="ChEBI" id="CHEBI:49883"/>
        <note>ligand shared between dimeric partners</note>
    </ligand>
</feature>
<feature type="binding site" evidence="1">
    <location>
        <position position="133"/>
    </location>
    <ligand>
        <name>[4Fe-4S] cluster</name>
        <dbReference type="ChEBI" id="CHEBI:49883"/>
        <note>ligand shared between dimeric partners</note>
    </ligand>
</feature>
<feature type="modified residue" description="ADP-ribosylarginine; by dinitrogenase reductase ADP-ribosyltransferase" evidence="1">
    <location>
        <position position="102"/>
    </location>
</feature>
<sequence length="294" mass="31561">MASLRQIAFYGKGGIGKSTTSQNTLAALAEMGQKILIVGCDPKADSTRLILHAKAQDTILSLAASAGSVEDLELEDVMKVGYQDIRCVESGGPEPGVGCAGRGVITSINFLEENGAYENIDYVSYDVLGDVVCGGFAMPIRENKAQEIYIVMSGEMMAMYAANNISKGILKYANSGGVRLGGLICNERQTDKELELAEALAKKLGTQLIYFVPRDNVVQHAELRRMTVLEYAPDSKQADHYRKLAAKVHNNGGKGIIPTPISMDELEDMLMEHGIIKAVDESIIGKTAAELAAS</sequence>
<organism>
    <name type="scientific">Bradyrhizobium diazoefficiens (strain JCM 10833 / BCRC 13528 / IAM 13628 / NBRC 14792 / USDA 110)</name>
    <dbReference type="NCBI Taxonomy" id="224911"/>
    <lineage>
        <taxon>Bacteria</taxon>
        <taxon>Pseudomonadati</taxon>
        <taxon>Pseudomonadota</taxon>
        <taxon>Alphaproteobacteria</taxon>
        <taxon>Hyphomicrobiales</taxon>
        <taxon>Nitrobacteraceae</taxon>
        <taxon>Bradyrhizobium</taxon>
    </lineage>
</organism>
<dbReference type="EC" id="1.18.6.1"/>
<dbReference type="EMBL" id="K01620">
    <property type="protein sequence ID" value="AAA26322.1"/>
    <property type="molecule type" value="Genomic_DNA"/>
</dbReference>
<dbReference type="EMBL" id="AH010242">
    <property type="protein sequence ID" value="AAG60754.1"/>
    <property type="molecule type" value="Genomic_DNA"/>
</dbReference>
<dbReference type="EMBL" id="BA000040">
    <property type="protein sequence ID" value="BAC47034.1"/>
    <property type="molecule type" value="Genomic_DNA"/>
</dbReference>
<dbReference type="PIR" id="S14044">
    <property type="entry name" value="NIZJFE"/>
</dbReference>
<dbReference type="RefSeq" id="NP_768409.1">
    <property type="nucleotide sequence ID" value="NC_004463.1"/>
</dbReference>
<dbReference type="RefSeq" id="WP_011084578.1">
    <property type="nucleotide sequence ID" value="NZ_CP011360.1"/>
</dbReference>
<dbReference type="SMR" id="P06117"/>
<dbReference type="STRING" id="224911.AAV28_05765"/>
<dbReference type="EnsemblBacteria" id="BAC47034">
    <property type="protein sequence ID" value="BAC47034"/>
    <property type="gene ID" value="BAC47034"/>
</dbReference>
<dbReference type="GeneID" id="92969949"/>
<dbReference type="KEGG" id="bja:blr1769"/>
<dbReference type="PATRIC" id="fig|224911.44.peg.1236"/>
<dbReference type="eggNOG" id="COG1348">
    <property type="taxonomic scope" value="Bacteria"/>
</dbReference>
<dbReference type="HOGENOM" id="CLU_059373_0_0_5"/>
<dbReference type="InParanoid" id="P06117"/>
<dbReference type="OrthoDB" id="9778641at2"/>
<dbReference type="PhylomeDB" id="P06117"/>
<dbReference type="Proteomes" id="UP000002526">
    <property type="component" value="Chromosome"/>
</dbReference>
<dbReference type="GO" id="GO:0051539">
    <property type="term" value="F:4 iron, 4 sulfur cluster binding"/>
    <property type="evidence" value="ECO:0007669"/>
    <property type="project" value="UniProtKB-KW"/>
</dbReference>
<dbReference type="GO" id="GO:0005524">
    <property type="term" value="F:ATP binding"/>
    <property type="evidence" value="ECO:0007669"/>
    <property type="project" value="UniProtKB-UniRule"/>
</dbReference>
<dbReference type="GO" id="GO:0046872">
    <property type="term" value="F:metal ion binding"/>
    <property type="evidence" value="ECO:0007669"/>
    <property type="project" value="UniProtKB-KW"/>
</dbReference>
<dbReference type="GO" id="GO:0016163">
    <property type="term" value="F:nitrogenase activity"/>
    <property type="evidence" value="ECO:0007669"/>
    <property type="project" value="UniProtKB-UniRule"/>
</dbReference>
<dbReference type="GO" id="GO:0009399">
    <property type="term" value="P:nitrogen fixation"/>
    <property type="evidence" value="ECO:0007669"/>
    <property type="project" value="UniProtKB-UniRule"/>
</dbReference>
<dbReference type="CDD" id="cd02040">
    <property type="entry name" value="NifH"/>
    <property type="match status" value="1"/>
</dbReference>
<dbReference type="FunFam" id="3.40.50.300:FF:001379">
    <property type="entry name" value="Nitrogenase iron protein 1"/>
    <property type="match status" value="1"/>
</dbReference>
<dbReference type="Gene3D" id="3.40.50.300">
    <property type="entry name" value="P-loop containing nucleotide triphosphate hydrolases"/>
    <property type="match status" value="1"/>
</dbReference>
<dbReference type="HAMAP" id="MF_00533">
    <property type="entry name" value="NifH"/>
    <property type="match status" value="1"/>
</dbReference>
<dbReference type="InterPro" id="IPR030655">
    <property type="entry name" value="NifH/chlL_CS"/>
</dbReference>
<dbReference type="InterPro" id="IPR000392">
    <property type="entry name" value="NifH/frxC"/>
</dbReference>
<dbReference type="InterPro" id="IPR005977">
    <property type="entry name" value="Nitrogenase_Fe_NifH"/>
</dbReference>
<dbReference type="InterPro" id="IPR027417">
    <property type="entry name" value="P-loop_NTPase"/>
</dbReference>
<dbReference type="NCBIfam" id="TIGR01287">
    <property type="entry name" value="nifH"/>
    <property type="match status" value="1"/>
</dbReference>
<dbReference type="PANTHER" id="PTHR42864">
    <property type="entry name" value="LIGHT-INDEPENDENT PROTOCHLOROPHYLLIDE REDUCTASE IRON-SULFUR ATP-BINDING PROTEIN"/>
    <property type="match status" value="1"/>
</dbReference>
<dbReference type="PANTHER" id="PTHR42864:SF2">
    <property type="entry name" value="LIGHT-INDEPENDENT PROTOCHLOROPHYLLIDE REDUCTASE IRON-SULFUR ATP-BINDING PROTEIN"/>
    <property type="match status" value="1"/>
</dbReference>
<dbReference type="Pfam" id="PF00142">
    <property type="entry name" value="Fer4_NifH"/>
    <property type="match status" value="1"/>
</dbReference>
<dbReference type="PIRSF" id="PIRSF000363">
    <property type="entry name" value="Nitrogenase_iron"/>
    <property type="match status" value="1"/>
</dbReference>
<dbReference type="PRINTS" id="PR00091">
    <property type="entry name" value="NITROGNASEII"/>
</dbReference>
<dbReference type="SUPFAM" id="SSF52540">
    <property type="entry name" value="P-loop containing nucleoside triphosphate hydrolases"/>
    <property type="match status" value="1"/>
</dbReference>
<dbReference type="PROSITE" id="PS00746">
    <property type="entry name" value="NIFH_FRXC_1"/>
    <property type="match status" value="1"/>
</dbReference>
<dbReference type="PROSITE" id="PS00692">
    <property type="entry name" value="NIFH_FRXC_2"/>
    <property type="match status" value="1"/>
</dbReference>
<dbReference type="PROSITE" id="PS51026">
    <property type="entry name" value="NIFH_FRXC_3"/>
    <property type="match status" value="1"/>
</dbReference>
<keyword id="KW-0004">4Fe-4S</keyword>
<keyword id="KW-0013">ADP-ribosylation</keyword>
<keyword id="KW-0067">ATP-binding</keyword>
<keyword id="KW-0408">Iron</keyword>
<keyword id="KW-0411">Iron-sulfur</keyword>
<keyword id="KW-0479">Metal-binding</keyword>
<keyword id="KW-0535">Nitrogen fixation</keyword>
<keyword id="KW-0547">Nucleotide-binding</keyword>
<keyword id="KW-0560">Oxidoreductase</keyword>
<keyword id="KW-1185">Reference proteome</keyword>
<protein>
    <recommendedName>
        <fullName>Nitrogenase iron protein</fullName>
        <ecNumber>1.18.6.1</ecNumber>
    </recommendedName>
    <alternativeName>
        <fullName>Nitrogenase Fe protein</fullName>
    </alternativeName>
    <alternativeName>
        <fullName>Nitrogenase component II</fullName>
    </alternativeName>
    <alternativeName>
        <fullName>Nitrogenase reductase</fullName>
    </alternativeName>
</protein>
<reference key="1">
    <citation type="journal article" date="1984" name="J. Bacteriol.">
        <title>Rhizobium japonicum nitrogenase Fe protein gene (nifH).</title>
        <authorList>
            <person name="Fuhrmann M."/>
            <person name="Hennecke H."/>
        </authorList>
    </citation>
    <scope>NUCLEOTIDE SEQUENCE [GENOMIC DNA]</scope>
</reference>
<reference key="2">
    <citation type="journal article" date="2001" name="J. Bacteriol.">
        <title>Potential symbiosis-specific genes uncovered by sequencing a 410-kb DNA region of the Bradyrhizobium japonicum chromosome.</title>
        <authorList>
            <person name="Goettfert M."/>
            <person name="Roethlisberger S."/>
            <person name="Kuendig C."/>
            <person name="Beck C."/>
            <person name="Marty R."/>
            <person name="Hennecke H."/>
        </authorList>
    </citation>
    <scope>NUCLEOTIDE SEQUENCE [GENOMIC DNA]</scope>
    <source>
        <strain>USDA 110spc4</strain>
    </source>
</reference>
<reference key="3">
    <citation type="journal article" date="2002" name="DNA Res.">
        <title>Complete genomic sequence of nitrogen-fixing symbiotic bacterium Bradyrhizobium japonicum USDA110.</title>
        <authorList>
            <person name="Kaneko T."/>
            <person name="Nakamura Y."/>
            <person name="Sato S."/>
            <person name="Minamisawa K."/>
            <person name="Uchiumi T."/>
            <person name="Sasamoto S."/>
            <person name="Watanabe A."/>
            <person name="Idesawa K."/>
            <person name="Iriguchi M."/>
            <person name="Kawashima K."/>
            <person name="Kohara M."/>
            <person name="Matsumoto M."/>
            <person name="Shimpo S."/>
            <person name="Tsuruoka H."/>
            <person name="Wada T."/>
            <person name="Yamada M."/>
            <person name="Tabata S."/>
        </authorList>
    </citation>
    <scope>NUCLEOTIDE SEQUENCE [LARGE SCALE GENOMIC DNA]</scope>
    <source>
        <strain>JCM 10833 / BCRC 13528 / IAM 13628 / NBRC 14792 / USDA 110</strain>
    </source>
</reference>
<reference key="4">
    <citation type="journal article" date="1984" name="J. Mol. Appl. Genet.">
        <title>The nifH and nifDK promoter regions from Rhizobium japonicum share structural homologies with each other and with nitrogen-regulated promoters from other organisms.</title>
        <authorList>
            <person name="Adams T.H."/>
            <person name="Chelm B.K."/>
        </authorList>
    </citation>
    <scope>NUCLEOTIDE SEQUENCE [GENOMIC DNA] OF 1-94</scope>
</reference>
<evidence type="ECO:0000250" key="1"/>
<evidence type="ECO:0000255" key="2"/>
<evidence type="ECO:0000305" key="3"/>
<gene>
    <name type="primary">nifH</name>
    <name type="ordered locus">blr1769</name>
</gene>
<accession>P06117</accession>
<proteinExistence type="inferred from homology"/>
<comment type="function">
    <text>The key enzymatic reactions in nitrogen fixation are catalyzed by the nitrogenase complex, which has 2 components: the iron protein and the molybdenum-iron protein.</text>
</comment>
<comment type="catalytic activity">
    <reaction>
        <text>N2 + 8 reduced [2Fe-2S]-[ferredoxin] + 16 ATP + 16 H2O = H2 + 8 oxidized [2Fe-2S]-[ferredoxin] + 2 NH4(+) + 16 ADP + 16 phosphate + 6 H(+)</text>
        <dbReference type="Rhea" id="RHEA:21448"/>
        <dbReference type="Rhea" id="RHEA-COMP:10000"/>
        <dbReference type="Rhea" id="RHEA-COMP:10001"/>
        <dbReference type="ChEBI" id="CHEBI:15377"/>
        <dbReference type="ChEBI" id="CHEBI:15378"/>
        <dbReference type="ChEBI" id="CHEBI:17997"/>
        <dbReference type="ChEBI" id="CHEBI:18276"/>
        <dbReference type="ChEBI" id="CHEBI:28938"/>
        <dbReference type="ChEBI" id="CHEBI:30616"/>
        <dbReference type="ChEBI" id="CHEBI:33737"/>
        <dbReference type="ChEBI" id="CHEBI:33738"/>
        <dbReference type="ChEBI" id="CHEBI:43474"/>
        <dbReference type="ChEBI" id="CHEBI:456216"/>
        <dbReference type="EC" id="1.18.6.1"/>
    </reaction>
</comment>
<comment type="cofactor">
    <cofactor>
        <name>[4Fe-4S] cluster</name>
        <dbReference type="ChEBI" id="CHEBI:49883"/>
    </cofactor>
    <text>Binds 1 [4Fe-4S] cluster per dimer.</text>
</comment>
<comment type="subunit">
    <text>Homodimer.</text>
</comment>
<comment type="PTM">
    <text evidence="1">The reversible ADP-ribosylation of Arg-102 inactivates the nitrogenase reductase and regulates nitrogenase activity.</text>
</comment>
<comment type="similarity">
    <text evidence="3">Belongs to the NifH/BchL/ChlL family.</text>
</comment>